<keyword id="KW-0028">Amino-acid biosynthesis</keyword>
<keyword id="KW-0055">Arginine biosynthesis</keyword>
<keyword id="KW-0963">Cytoplasm</keyword>
<keyword id="KW-0521">NADP</keyword>
<keyword id="KW-0560">Oxidoreductase</keyword>
<reference key="1">
    <citation type="journal article" date="2007" name="PLoS Genet.">
        <title>Meningococcal genetic variation mechanisms viewed through comparative analysis of serogroup C strain FAM18.</title>
        <authorList>
            <person name="Bentley S.D."/>
            <person name="Vernikos G.S."/>
            <person name="Snyder L.A.S."/>
            <person name="Churcher C."/>
            <person name="Arrowsmith C."/>
            <person name="Chillingworth T."/>
            <person name="Cronin A."/>
            <person name="Davis P.H."/>
            <person name="Holroyd N.E."/>
            <person name="Jagels K."/>
            <person name="Maddison M."/>
            <person name="Moule S."/>
            <person name="Rabbinowitsch E."/>
            <person name="Sharp S."/>
            <person name="Unwin L."/>
            <person name="Whitehead S."/>
            <person name="Quail M.A."/>
            <person name="Achtman M."/>
            <person name="Barrell B.G."/>
            <person name="Saunders N.J."/>
            <person name="Parkhill J."/>
        </authorList>
    </citation>
    <scope>NUCLEOTIDE SEQUENCE [LARGE SCALE GENOMIC DNA]</scope>
    <source>
        <strain>ATCC 700532 / DSM 15464 / FAM18</strain>
    </source>
</reference>
<protein>
    <recommendedName>
        <fullName evidence="1">N-acetyl-gamma-glutamyl-phosphate reductase</fullName>
        <shortName evidence="1">AGPR</shortName>
        <ecNumber evidence="1">1.2.1.38</ecNumber>
    </recommendedName>
    <alternativeName>
        <fullName evidence="1">N-acetyl-glutamate semialdehyde dehydrogenase</fullName>
        <shortName evidence="1">NAGSA dehydrogenase</shortName>
    </alternativeName>
</protein>
<evidence type="ECO:0000255" key="1">
    <source>
        <dbReference type="HAMAP-Rule" id="MF_00150"/>
    </source>
</evidence>
<proteinExistence type="inferred from homology"/>
<feature type="chain" id="PRO_1000011023" description="N-acetyl-gamma-glutamyl-phosphate reductase">
    <location>
        <begin position="1"/>
        <end position="347"/>
    </location>
</feature>
<feature type="active site" evidence="1">
    <location>
        <position position="152"/>
    </location>
</feature>
<sequence>MSKKIKVGIVGATGYTGVELLRLLAAHPDVEVAAVTSRSEAGTAVADYFPSLRGVYGLAFQTPDEAGLEQCDIVFFATPNGIAMKDAPRLIEQGVRVIDLSADFRIWDIPTWEHWYGMPHAAPGLVSQAVYGLSELNREAVAQARLVANPGCYPTCVSLPLVPLLRQCRLKPGMPLIADCKSGVSGAGRKGNVGSLLCEVGDNFKAYGIAGHRHLPEIRQTIAGLQDGIAEGFVFTPHLAPMIRGMHATVYLHLSDGICPETILRDYYRDSLFVDILPAGSTPETRSVRGANLCRISIQQAAQSDVWVVLSVIDNLVKGAAGQAVQNMNIMFGLKETHGLGAIPLLP</sequence>
<name>ARGC_NEIMF</name>
<comment type="function">
    <text evidence="1">Catalyzes the NADPH-dependent reduction of N-acetyl-5-glutamyl phosphate to yield N-acetyl-L-glutamate 5-semialdehyde.</text>
</comment>
<comment type="catalytic activity">
    <reaction evidence="1">
        <text>N-acetyl-L-glutamate 5-semialdehyde + phosphate + NADP(+) = N-acetyl-L-glutamyl 5-phosphate + NADPH + H(+)</text>
        <dbReference type="Rhea" id="RHEA:21588"/>
        <dbReference type="ChEBI" id="CHEBI:15378"/>
        <dbReference type="ChEBI" id="CHEBI:29123"/>
        <dbReference type="ChEBI" id="CHEBI:43474"/>
        <dbReference type="ChEBI" id="CHEBI:57783"/>
        <dbReference type="ChEBI" id="CHEBI:57936"/>
        <dbReference type="ChEBI" id="CHEBI:58349"/>
        <dbReference type="EC" id="1.2.1.38"/>
    </reaction>
</comment>
<comment type="pathway">
    <text evidence="1">Amino-acid biosynthesis; L-arginine biosynthesis; N(2)-acetyl-L-ornithine from L-glutamate: step 3/4.</text>
</comment>
<comment type="subcellular location">
    <subcellularLocation>
        <location evidence="1">Cytoplasm</location>
    </subcellularLocation>
</comment>
<comment type="similarity">
    <text evidence="1">Belongs to the NAGSA dehydrogenase family. Type 1 subfamily.</text>
</comment>
<dbReference type="EC" id="1.2.1.38" evidence="1"/>
<dbReference type="EMBL" id="AM421808">
    <property type="protein sequence ID" value="CAM09739.1"/>
    <property type="molecule type" value="Genomic_DNA"/>
</dbReference>
<dbReference type="RefSeq" id="WP_002221439.1">
    <property type="nucleotide sequence ID" value="NC_008767.1"/>
</dbReference>
<dbReference type="SMR" id="A1KSA9"/>
<dbReference type="KEGG" id="nmc:NMC0434"/>
<dbReference type="HOGENOM" id="CLU_006384_0_1_4"/>
<dbReference type="UniPathway" id="UPA00068">
    <property type="reaction ID" value="UER00108"/>
</dbReference>
<dbReference type="Proteomes" id="UP000002286">
    <property type="component" value="Chromosome"/>
</dbReference>
<dbReference type="GO" id="GO:0005737">
    <property type="term" value="C:cytoplasm"/>
    <property type="evidence" value="ECO:0007669"/>
    <property type="project" value="UniProtKB-SubCell"/>
</dbReference>
<dbReference type="GO" id="GO:0003942">
    <property type="term" value="F:N-acetyl-gamma-glutamyl-phosphate reductase activity"/>
    <property type="evidence" value="ECO:0007669"/>
    <property type="project" value="UniProtKB-UniRule"/>
</dbReference>
<dbReference type="GO" id="GO:0051287">
    <property type="term" value="F:NAD binding"/>
    <property type="evidence" value="ECO:0007669"/>
    <property type="project" value="InterPro"/>
</dbReference>
<dbReference type="GO" id="GO:0070401">
    <property type="term" value="F:NADP+ binding"/>
    <property type="evidence" value="ECO:0007669"/>
    <property type="project" value="InterPro"/>
</dbReference>
<dbReference type="GO" id="GO:0006526">
    <property type="term" value="P:L-arginine biosynthetic process"/>
    <property type="evidence" value="ECO:0007669"/>
    <property type="project" value="UniProtKB-UniRule"/>
</dbReference>
<dbReference type="CDD" id="cd23934">
    <property type="entry name" value="AGPR_1_C"/>
    <property type="match status" value="1"/>
</dbReference>
<dbReference type="CDD" id="cd17895">
    <property type="entry name" value="AGPR_1_N"/>
    <property type="match status" value="1"/>
</dbReference>
<dbReference type="Gene3D" id="3.30.360.10">
    <property type="entry name" value="Dihydrodipicolinate Reductase, domain 2"/>
    <property type="match status" value="1"/>
</dbReference>
<dbReference type="Gene3D" id="3.40.50.720">
    <property type="entry name" value="NAD(P)-binding Rossmann-like Domain"/>
    <property type="match status" value="1"/>
</dbReference>
<dbReference type="HAMAP" id="MF_00150">
    <property type="entry name" value="ArgC_type1"/>
    <property type="match status" value="1"/>
</dbReference>
<dbReference type="InterPro" id="IPR023013">
    <property type="entry name" value="AGPR_AS"/>
</dbReference>
<dbReference type="InterPro" id="IPR000706">
    <property type="entry name" value="AGPR_type-1"/>
</dbReference>
<dbReference type="InterPro" id="IPR036291">
    <property type="entry name" value="NAD(P)-bd_dom_sf"/>
</dbReference>
<dbReference type="InterPro" id="IPR050085">
    <property type="entry name" value="NAGSA_dehydrogenase"/>
</dbReference>
<dbReference type="InterPro" id="IPR000534">
    <property type="entry name" value="Semialdehyde_DH_NAD-bd"/>
</dbReference>
<dbReference type="NCBIfam" id="TIGR01850">
    <property type="entry name" value="argC"/>
    <property type="match status" value="1"/>
</dbReference>
<dbReference type="PANTHER" id="PTHR32338:SF10">
    <property type="entry name" value="N-ACETYL-GAMMA-GLUTAMYL-PHOSPHATE REDUCTASE, CHLOROPLASTIC-RELATED"/>
    <property type="match status" value="1"/>
</dbReference>
<dbReference type="PANTHER" id="PTHR32338">
    <property type="entry name" value="N-ACETYL-GAMMA-GLUTAMYL-PHOSPHATE REDUCTASE, CHLOROPLASTIC-RELATED-RELATED"/>
    <property type="match status" value="1"/>
</dbReference>
<dbReference type="Pfam" id="PF01118">
    <property type="entry name" value="Semialdhyde_dh"/>
    <property type="match status" value="1"/>
</dbReference>
<dbReference type="Pfam" id="PF22698">
    <property type="entry name" value="Semialdhyde_dhC_1"/>
    <property type="match status" value="1"/>
</dbReference>
<dbReference type="SMART" id="SM00859">
    <property type="entry name" value="Semialdhyde_dh"/>
    <property type="match status" value="1"/>
</dbReference>
<dbReference type="SUPFAM" id="SSF55347">
    <property type="entry name" value="Glyceraldehyde-3-phosphate dehydrogenase-like, C-terminal domain"/>
    <property type="match status" value="1"/>
</dbReference>
<dbReference type="SUPFAM" id="SSF51735">
    <property type="entry name" value="NAD(P)-binding Rossmann-fold domains"/>
    <property type="match status" value="1"/>
</dbReference>
<dbReference type="PROSITE" id="PS01224">
    <property type="entry name" value="ARGC"/>
    <property type="match status" value="1"/>
</dbReference>
<gene>
    <name evidence="1" type="primary">argC</name>
    <name type="ordered locus">NMC0434</name>
</gene>
<organism>
    <name type="scientific">Neisseria meningitidis serogroup C / serotype 2a (strain ATCC 700532 / DSM 15464 / FAM18)</name>
    <dbReference type="NCBI Taxonomy" id="272831"/>
    <lineage>
        <taxon>Bacteria</taxon>
        <taxon>Pseudomonadati</taxon>
        <taxon>Pseudomonadota</taxon>
        <taxon>Betaproteobacteria</taxon>
        <taxon>Neisseriales</taxon>
        <taxon>Neisseriaceae</taxon>
        <taxon>Neisseria</taxon>
    </lineage>
</organism>
<accession>A1KSA9</accession>